<reference key="1">
    <citation type="journal article" date="2007" name="BMC Microbiol.">
        <title>Subtle genetic changes enhance virulence of methicillin resistant and sensitive Staphylococcus aureus.</title>
        <authorList>
            <person name="Highlander S.K."/>
            <person name="Hulten K.G."/>
            <person name="Qin X."/>
            <person name="Jiang H."/>
            <person name="Yerrapragada S."/>
            <person name="Mason E.O. Jr."/>
            <person name="Shang Y."/>
            <person name="Williams T.M."/>
            <person name="Fortunov R.M."/>
            <person name="Liu Y."/>
            <person name="Igboeli O."/>
            <person name="Petrosino J."/>
            <person name="Tirumalai M."/>
            <person name="Uzman A."/>
            <person name="Fox G.E."/>
            <person name="Cardenas A.M."/>
            <person name="Muzny D.M."/>
            <person name="Hemphill L."/>
            <person name="Ding Y."/>
            <person name="Dugan S."/>
            <person name="Blyth P.R."/>
            <person name="Buhay C.J."/>
            <person name="Dinh H.H."/>
            <person name="Hawes A.C."/>
            <person name="Holder M."/>
            <person name="Kovar C.L."/>
            <person name="Lee S.L."/>
            <person name="Liu W."/>
            <person name="Nazareth L.V."/>
            <person name="Wang Q."/>
            <person name="Zhou J."/>
            <person name="Kaplan S.L."/>
            <person name="Weinstock G.M."/>
        </authorList>
    </citation>
    <scope>NUCLEOTIDE SEQUENCE [LARGE SCALE GENOMIC DNA]</scope>
    <source>
        <strain>USA300 / TCH1516</strain>
    </source>
</reference>
<protein>
    <recommendedName>
        <fullName evidence="1">Ribosome-binding factor A</fullName>
    </recommendedName>
</protein>
<gene>
    <name evidence="1" type="primary">rbfA</name>
    <name type="ordered locus">USA300HOU_1202</name>
</gene>
<dbReference type="EMBL" id="CP000730">
    <property type="protein sequence ID" value="ABX29216.1"/>
    <property type="molecule type" value="Genomic_DNA"/>
</dbReference>
<dbReference type="RefSeq" id="WP_000097322.1">
    <property type="nucleotide sequence ID" value="NC_010079.1"/>
</dbReference>
<dbReference type="SMR" id="A8Z3V0"/>
<dbReference type="KEGG" id="sax:USA300HOU_1202"/>
<dbReference type="HOGENOM" id="CLU_089475_6_3_9"/>
<dbReference type="GO" id="GO:0005829">
    <property type="term" value="C:cytosol"/>
    <property type="evidence" value="ECO:0007669"/>
    <property type="project" value="TreeGrafter"/>
</dbReference>
<dbReference type="GO" id="GO:0043024">
    <property type="term" value="F:ribosomal small subunit binding"/>
    <property type="evidence" value="ECO:0007669"/>
    <property type="project" value="TreeGrafter"/>
</dbReference>
<dbReference type="GO" id="GO:0030490">
    <property type="term" value="P:maturation of SSU-rRNA"/>
    <property type="evidence" value="ECO:0007669"/>
    <property type="project" value="UniProtKB-UniRule"/>
</dbReference>
<dbReference type="FunFam" id="3.30.300.20:FF:000009">
    <property type="entry name" value="Ribosome-binding factor A"/>
    <property type="match status" value="1"/>
</dbReference>
<dbReference type="Gene3D" id="3.30.300.20">
    <property type="match status" value="1"/>
</dbReference>
<dbReference type="HAMAP" id="MF_00003">
    <property type="entry name" value="RbfA"/>
    <property type="match status" value="1"/>
</dbReference>
<dbReference type="InterPro" id="IPR015946">
    <property type="entry name" value="KH_dom-like_a/b"/>
</dbReference>
<dbReference type="InterPro" id="IPR000238">
    <property type="entry name" value="RbfA"/>
</dbReference>
<dbReference type="InterPro" id="IPR023799">
    <property type="entry name" value="RbfA_dom_sf"/>
</dbReference>
<dbReference type="InterPro" id="IPR020053">
    <property type="entry name" value="Ribosome-bd_factorA_CS"/>
</dbReference>
<dbReference type="NCBIfam" id="TIGR00082">
    <property type="entry name" value="rbfA"/>
    <property type="match status" value="1"/>
</dbReference>
<dbReference type="PANTHER" id="PTHR33515">
    <property type="entry name" value="RIBOSOME-BINDING FACTOR A, CHLOROPLASTIC-RELATED"/>
    <property type="match status" value="1"/>
</dbReference>
<dbReference type="PANTHER" id="PTHR33515:SF1">
    <property type="entry name" value="RIBOSOME-BINDING FACTOR A, CHLOROPLASTIC-RELATED"/>
    <property type="match status" value="1"/>
</dbReference>
<dbReference type="Pfam" id="PF02033">
    <property type="entry name" value="RBFA"/>
    <property type="match status" value="1"/>
</dbReference>
<dbReference type="SUPFAM" id="SSF89919">
    <property type="entry name" value="Ribosome-binding factor A, RbfA"/>
    <property type="match status" value="1"/>
</dbReference>
<dbReference type="PROSITE" id="PS01319">
    <property type="entry name" value="RBFA"/>
    <property type="match status" value="1"/>
</dbReference>
<sequence>MSSMRAERVGEQMKKELMDIINNKVKDPRVGFITITDVVLTNDLSQAKVFLTVLGNDKEVENTFKALDKAKGFIKSELGSRMRLRIMPELMYEYDQSIEYGNKIERMIQDLHKQDR</sequence>
<organism>
    <name type="scientific">Staphylococcus aureus (strain USA300 / TCH1516)</name>
    <dbReference type="NCBI Taxonomy" id="451516"/>
    <lineage>
        <taxon>Bacteria</taxon>
        <taxon>Bacillati</taxon>
        <taxon>Bacillota</taxon>
        <taxon>Bacilli</taxon>
        <taxon>Bacillales</taxon>
        <taxon>Staphylococcaceae</taxon>
        <taxon>Staphylococcus</taxon>
    </lineage>
</organism>
<accession>A8Z3V0</accession>
<feature type="chain" id="PRO_1000073783" description="Ribosome-binding factor A">
    <location>
        <begin position="1"/>
        <end position="116"/>
    </location>
</feature>
<proteinExistence type="inferred from homology"/>
<keyword id="KW-0963">Cytoplasm</keyword>
<keyword id="KW-0690">Ribosome biogenesis</keyword>
<evidence type="ECO:0000255" key="1">
    <source>
        <dbReference type="HAMAP-Rule" id="MF_00003"/>
    </source>
</evidence>
<comment type="function">
    <text evidence="1">One of several proteins that assist in the late maturation steps of the functional core of the 30S ribosomal subunit. Associates with free 30S ribosomal subunits (but not with 30S subunits that are part of 70S ribosomes or polysomes). Required for efficient processing of 16S rRNA. May interact with the 5'-terminal helix region of 16S rRNA.</text>
</comment>
<comment type="subunit">
    <text evidence="1">Monomer. Binds 30S ribosomal subunits, but not 50S ribosomal subunits or 70S ribosomes.</text>
</comment>
<comment type="subcellular location">
    <subcellularLocation>
        <location evidence="1">Cytoplasm</location>
    </subcellularLocation>
</comment>
<comment type="similarity">
    <text evidence="1">Belongs to the RbfA family.</text>
</comment>
<name>RBFA_STAAT</name>